<protein>
    <recommendedName>
        <fullName>Plastin-1</fullName>
    </recommendedName>
    <alternativeName>
        <fullName>Fimbrin</fullName>
    </alternativeName>
</protein>
<proteinExistence type="evidence at protein level"/>
<evidence type="ECO:0000250" key="1">
    <source>
        <dbReference type="UniProtKB" id="Q3V0K9"/>
    </source>
</evidence>
<evidence type="ECO:0000255" key="2">
    <source>
        <dbReference type="PROSITE-ProRule" id="PRU00044"/>
    </source>
</evidence>
<evidence type="ECO:0000255" key="3">
    <source>
        <dbReference type="PROSITE-ProRule" id="PRU00448"/>
    </source>
</evidence>
<reference key="1">
    <citation type="journal article" date="1990" name="J. Cell Biol.">
        <title>Fimbrin is a homologue of the cytoplasmic phosphoprotein plastin and has domains homologous with calmodulin and actin gelation proteins.</title>
        <authorList>
            <person name="de Arruda M.V."/>
            <person name="Watson S."/>
            <person name="Lin C.-S."/>
            <person name="Leavitt J."/>
            <person name="Matsudaira P."/>
        </authorList>
    </citation>
    <scope>NUCLEOTIDE SEQUENCE [MRNA]</scope>
    <scope>PARTIAL PROTEIN SEQUENCE</scope>
    <source>
        <tissue>Intestine</tissue>
    </source>
</reference>
<dbReference type="EMBL" id="X52562">
    <property type="protein sequence ID" value="CAA36796.1"/>
    <property type="molecule type" value="mRNA"/>
</dbReference>
<dbReference type="PIR" id="A37097">
    <property type="entry name" value="A37097"/>
</dbReference>
<dbReference type="RefSeq" id="NP_001383044.1">
    <property type="nucleotide sequence ID" value="NM_001396115.1"/>
</dbReference>
<dbReference type="RefSeq" id="NP_001383045.1">
    <property type="nucleotide sequence ID" value="NM_001396116.1"/>
</dbReference>
<dbReference type="RefSeq" id="NP_001383046.1">
    <property type="nucleotide sequence ID" value="NM_001396117.1"/>
</dbReference>
<dbReference type="RefSeq" id="NP_001383047.1">
    <property type="nucleotide sequence ID" value="NM_001396118.1"/>
</dbReference>
<dbReference type="RefSeq" id="NP_990678.1">
    <property type="nucleotide sequence ID" value="NM_205347.2"/>
</dbReference>
<dbReference type="RefSeq" id="XP_015132331.1">
    <property type="nucleotide sequence ID" value="XM_015276845.1"/>
</dbReference>
<dbReference type="RefSeq" id="XP_040561417.1">
    <property type="nucleotide sequence ID" value="XM_040705483.2"/>
</dbReference>
<dbReference type="RefSeq" id="XP_040561418.1">
    <property type="nucleotide sequence ID" value="XM_040705484.2"/>
</dbReference>
<dbReference type="RefSeq" id="XP_040561420.1">
    <property type="nucleotide sequence ID" value="XM_040705486.2"/>
</dbReference>
<dbReference type="RefSeq" id="XP_046754291.1">
    <property type="nucleotide sequence ID" value="XM_046898335.1"/>
</dbReference>
<dbReference type="RefSeq" id="XP_046754292.1">
    <property type="nucleotide sequence ID" value="XM_046898336.1"/>
</dbReference>
<dbReference type="RefSeq" id="XP_046754293.1">
    <property type="nucleotide sequence ID" value="XM_046898337.1"/>
</dbReference>
<dbReference type="RefSeq" id="XP_046754294.1">
    <property type="nucleotide sequence ID" value="XM_046898338.1"/>
</dbReference>
<dbReference type="RefSeq" id="XP_046754295.1">
    <property type="nucleotide sequence ID" value="XM_046898339.1"/>
</dbReference>
<dbReference type="RefSeq" id="XP_046754296.1">
    <property type="nucleotide sequence ID" value="XM_046898340.1"/>
</dbReference>
<dbReference type="RefSeq" id="XP_046779631.1">
    <property type="nucleotide sequence ID" value="XM_046923675.1"/>
</dbReference>
<dbReference type="RefSeq" id="XP_046779632.1">
    <property type="nucleotide sequence ID" value="XM_046923676.1"/>
</dbReference>
<dbReference type="RefSeq" id="XP_046779634.1">
    <property type="nucleotide sequence ID" value="XM_046923678.1"/>
</dbReference>
<dbReference type="RefSeq" id="XP_046779635.1">
    <property type="nucleotide sequence ID" value="XM_046923679.1"/>
</dbReference>
<dbReference type="RefSeq" id="XP_046779636.1">
    <property type="nucleotide sequence ID" value="XM_046923680.1"/>
</dbReference>
<dbReference type="RefSeq" id="XP_046779637.1">
    <property type="nucleotide sequence ID" value="XM_046923681.1"/>
</dbReference>
<dbReference type="RefSeq" id="XP_046779638.1">
    <property type="nucleotide sequence ID" value="XM_046923682.1"/>
</dbReference>
<dbReference type="RefSeq" id="XP_046779639.1">
    <property type="nucleotide sequence ID" value="XM_046923683.1"/>
</dbReference>
<dbReference type="SMR" id="P19179"/>
<dbReference type="BioGRID" id="676550">
    <property type="interactions" value="1"/>
</dbReference>
<dbReference type="FunCoup" id="P19179">
    <property type="interactions" value="1605"/>
</dbReference>
<dbReference type="STRING" id="9031.ENSGALP00000056193"/>
<dbReference type="GlyGen" id="P19179">
    <property type="glycosylation" value="1 site"/>
</dbReference>
<dbReference type="PaxDb" id="9031-ENSGALP00000004164"/>
<dbReference type="Ensembl" id="ENSGALT00010037990.1">
    <property type="protein sequence ID" value="ENSGALP00010021917.1"/>
    <property type="gene ID" value="ENSGALG00010015774.1"/>
</dbReference>
<dbReference type="GeneID" id="396291"/>
<dbReference type="KEGG" id="gga:396291"/>
<dbReference type="CTD" id="5357"/>
<dbReference type="VEuPathDB" id="HostDB:geneid_396291"/>
<dbReference type="eggNOG" id="KOG0046">
    <property type="taxonomic scope" value="Eukaryota"/>
</dbReference>
<dbReference type="GeneTree" id="ENSGT00950000183097"/>
<dbReference type="HOGENOM" id="CLU_015284_2_0_1"/>
<dbReference type="InParanoid" id="P19179"/>
<dbReference type="OMA" id="GILLXEN"/>
<dbReference type="OrthoDB" id="431378at2759"/>
<dbReference type="PhylomeDB" id="P19179"/>
<dbReference type="TreeFam" id="TF300680"/>
<dbReference type="PRO" id="PR:P19179"/>
<dbReference type="Proteomes" id="UP000000539">
    <property type="component" value="Chromosome 9"/>
</dbReference>
<dbReference type="Bgee" id="ENSGALG00000002647">
    <property type="expression patterns" value="Expressed in colon and 7 other cell types or tissues"/>
</dbReference>
<dbReference type="GO" id="GO:0005884">
    <property type="term" value="C:actin filament"/>
    <property type="evidence" value="ECO:0000318"/>
    <property type="project" value="GO_Central"/>
</dbReference>
<dbReference type="GO" id="GO:0032432">
    <property type="term" value="C:actin filament bundle"/>
    <property type="evidence" value="ECO:0000318"/>
    <property type="project" value="GO_Central"/>
</dbReference>
<dbReference type="GO" id="GO:0005903">
    <property type="term" value="C:brush border"/>
    <property type="evidence" value="ECO:0000304"/>
    <property type="project" value="AgBase"/>
</dbReference>
<dbReference type="GO" id="GO:0005737">
    <property type="term" value="C:cytoplasm"/>
    <property type="evidence" value="ECO:0000318"/>
    <property type="project" value="GO_Central"/>
</dbReference>
<dbReference type="GO" id="GO:0032420">
    <property type="term" value="C:stereocilium"/>
    <property type="evidence" value="ECO:0007669"/>
    <property type="project" value="UniProtKB-SubCell"/>
</dbReference>
<dbReference type="GO" id="GO:0003779">
    <property type="term" value="F:actin binding"/>
    <property type="evidence" value="ECO:0000304"/>
    <property type="project" value="AgBase"/>
</dbReference>
<dbReference type="GO" id="GO:0051015">
    <property type="term" value="F:actin filament binding"/>
    <property type="evidence" value="ECO:0000318"/>
    <property type="project" value="GO_Central"/>
</dbReference>
<dbReference type="GO" id="GO:0005509">
    <property type="term" value="F:calcium ion binding"/>
    <property type="evidence" value="ECO:0007669"/>
    <property type="project" value="InterPro"/>
</dbReference>
<dbReference type="GO" id="GO:0051017">
    <property type="term" value="P:actin filament bundle assembly"/>
    <property type="evidence" value="ECO:0000318"/>
    <property type="project" value="GO_Central"/>
</dbReference>
<dbReference type="GO" id="GO:0051639">
    <property type="term" value="P:actin filament network formation"/>
    <property type="evidence" value="ECO:0000318"/>
    <property type="project" value="GO_Central"/>
</dbReference>
<dbReference type="CDD" id="cd21323">
    <property type="entry name" value="CH_PLS1_rpt1"/>
    <property type="match status" value="1"/>
</dbReference>
<dbReference type="CDD" id="cd21326">
    <property type="entry name" value="CH_PLS1_rpt2"/>
    <property type="match status" value="1"/>
</dbReference>
<dbReference type="CDD" id="cd21329">
    <property type="entry name" value="CH_PLS1_rpt3"/>
    <property type="match status" value="1"/>
</dbReference>
<dbReference type="CDD" id="cd21332">
    <property type="entry name" value="CH_PLS1_rpt4"/>
    <property type="match status" value="1"/>
</dbReference>
<dbReference type="CDD" id="cd00051">
    <property type="entry name" value="EFh"/>
    <property type="match status" value="1"/>
</dbReference>
<dbReference type="FunFam" id="1.10.238.10:FF:000059">
    <property type="entry name" value="Plastin 1"/>
    <property type="match status" value="1"/>
</dbReference>
<dbReference type="FunFam" id="1.10.418.10:FF:000010">
    <property type="entry name" value="Plastin-3 isoform 1"/>
    <property type="match status" value="1"/>
</dbReference>
<dbReference type="FunFam" id="1.10.418.10:FF:000012">
    <property type="entry name" value="Plastin-3 isoform 1"/>
    <property type="match status" value="1"/>
</dbReference>
<dbReference type="FunFam" id="1.10.418.10:FF:000014">
    <property type="entry name" value="Plastin-3 isoform 1"/>
    <property type="match status" value="1"/>
</dbReference>
<dbReference type="FunFam" id="1.10.418.10:FF:000025">
    <property type="entry name" value="Plastin-3 isoform 1"/>
    <property type="match status" value="1"/>
</dbReference>
<dbReference type="Gene3D" id="1.10.418.10">
    <property type="entry name" value="Calponin-like domain"/>
    <property type="match status" value="4"/>
</dbReference>
<dbReference type="Gene3D" id="1.10.238.10">
    <property type="entry name" value="EF-hand"/>
    <property type="match status" value="1"/>
</dbReference>
<dbReference type="InterPro" id="IPR001589">
    <property type="entry name" value="Actinin_actin-bd_CS"/>
</dbReference>
<dbReference type="InterPro" id="IPR001715">
    <property type="entry name" value="CH_dom"/>
</dbReference>
<dbReference type="InterPro" id="IPR036872">
    <property type="entry name" value="CH_dom_sf"/>
</dbReference>
<dbReference type="InterPro" id="IPR011992">
    <property type="entry name" value="EF-hand-dom_pair"/>
</dbReference>
<dbReference type="InterPro" id="IPR018247">
    <property type="entry name" value="EF_Hand_1_Ca_BS"/>
</dbReference>
<dbReference type="InterPro" id="IPR002048">
    <property type="entry name" value="EF_hand_dom"/>
</dbReference>
<dbReference type="InterPro" id="IPR039959">
    <property type="entry name" value="Fimbrin/Plastin"/>
</dbReference>
<dbReference type="PANTHER" id="PTHR19961">
    <property type="entry name" value="FIMBRIN/PLASTIN"/>
    <property type="match status" value="1"/>
</dbReference>
<dbReference type="PANTHER" id="PTHR19961:SF27">
    <property type="entry name" value="PLASTIN-1"/>
    <property type="match status" value="1"/>
</dbReference>
<dbReference type="Pfam" id="PF00307">
    <property type="entry name" value="CH"/>
    <property type="match status" value="4"/>
</dbReference>
<dbReference type="Pfam" id="PF13499">
    <property type="entry name" value="EF-hand_7"/>
    <property type="match status" value="1"/>
</dbReference>
<dbReference type="SMART" id="SM00033">
    <property type="entry name" value="CH"/>
    <property type="match status" value="4"/>
</dbReference>
<dbReference type="SMART" id="SM00054">
    <property type="entry name" value="EFh"/>
    <property type="match status" value="2"/>
</dbReference>
<dbReference type="SUPFAM" id="SSF47576">
    <property type="entry name" value="Calponin-homology domain, CH-domain"/>
    <property type="match status" value="1"/>
</dbReference>
<dbReference type="SUPFAM" id="SSF47473">
    <property type="entry name" value="EF-hand"/>
    <property type="match status" value="1"/>
</dbReference>
<dbReference type="PROSITE" id="PS00019">
    <property type="entry name" value="ACTININ_1"/>
    <property type="match status" value="2"/>
</dbReference>
<dbReference type="PROSITE" id="PS00020">
    <property type="entry name" value="ACTININ_2"/>
    <property type="match status" value="2"/>
</dbReference>
<dbReference type="PROSITE" id="PS50021">
    <property type="entry name" value="CH"/>
    <property type="match status" value="4"/>
</dbReference>
<dbReference type="PROSITE" id="PS00018">
    <property type="entry name" value="EF_HAND_1"/>
    <property type="match status" value="2"/>
</dbReference>
<dbReference type="PROSITE" id="PS50222">
    <property type="entry name" value="EF_HAND_2"/>
    <property type="match status" value="2"/>
</dbReference>
<name>PLSI_CHICK</name>
<accession>P19179</accession>
<gene>
    <name type="primary">PLS1</name>
</gene>
<sequence length="630" mass="70939">MENNVTTISREELEELREAFNKIDIDNSGYVSDYELQDLFKEASLPLPGYKVREIIEKIFAVTDSNKDGKINFEEFVSLIQELKSKDVSKSYRKSINKKLGITALGGTSSISTEGTQHSYSEEEKVAFVNWINKALQDDPDCKHILPMNPSDASLFKSLADGILLCKMINFSQPDTIDERAINKKKLTPFTISENLNLALNSASAIGCTVVNIGSQDLQEGKPHLVLGLLWQIIKVGLFADIEISRNEALIALLNEGEELDQLMKLSPEELLLRWVNYHLANAGWQKISNFSQDIRDSRAYYHLLNQIAPKGDDFDEIHVEIDFSGFNDKNDLRRAECMLQQADKLGCRQFVTPADVVAGNPKLNLAFVANLFNTYPALHKPDNSSYDLTLLEGESNEERTFRNWMNSLGVSPYVNHLYSDLSDALIIFQLYEMTRVPVDWTHVNKRPYPLLGGNMKKIENCNYAVELGKTKAKFSLVGIAGHDLNEGNPTLTLALIWQLMRRYTLNVLSDLGEGEKVNDEIIIKWVNQTLANANKKTSITSFKDKSISTSLPVLDLIDAIAPKAVRQEMVKREDLSYQDKLNNAKYAISVARKIGARIYALPDDLVEVKPKMVMTVFACLMGRGLNKIK</sequence>
<keyword id="KW-0009">Actin-binding</keyword>
<keyword id="KW-0106">Calcium</keyword>
<keyword id="KW-0966">Cell projection</keyword>
<keyword id="KW-0963">Cytoplasm</keyword>
<keyword id="KW-0903">Direct protein sequencing</keyword>
<keyword id="KW-0479">Metal-binding</keyword>
<keyword id="KW-0597">Phosphoprotein</keyword>
<keyword id="KW-1185">Reference proteome</keyword>
<keyword id="KW-0677">Repeat</keyword>
<organism>
    <name type="scientific">Gallus gallus</name>
    <name type="common">Chicken</name>
    <dbReference type="NCBI Taxonomy" id="9031"/>
    <lineage>
        <taxon>Eukaryota</taxon>
        <taxon>Metazoa</taxon>
        <taxon>Chordata</taxon>
        <taxon>Craniata</taxon>
        <taxon>Vertebrata</taxon>
        <taxon>Euteleostomi</taxon>
        <taxon>Archelosauria</taxon>
        <taxon>Archosauria</taxon>
        <taxon>Dinosauria</taxon>
        <taxon>Saurischia</taxon>
        <taxon>Theropoda</taxon>
        <taxon>Coelurosauria</taxon>
        <taxon>Aves</taxon>
        <taxon>Neognathae</taxon>
        <taxon>Galloanserae</taxon>
        <taxon>Galliformes</taxon>
        <taxon>Phasianidae</taxon>
        <taxon>Phasianinae</taxon>
        <taxon>Gallus</taxon>
    </lineage>
</organism>
<comment type="function">
    <text evidence="1">Actin-bundling protein. In the inner ear, it is required for stereocilia formation. Mediates liquid packing of actin filaments that is necessary for stereocilia to grow to their proper dimensions.</text>
</comment>
<comment type="subunit">
    <text>Monomer.</text>
</comment>
<comment type="subcellular location">
    <subcellularLocation>
        <location evidence="1">Cytoplasm</location>
    </subcellularLocation>
    <subcellularLocation>
        <location evidence="1">Cell projection</location>
        <location evidence="1">Stereocilium</location>
    </subcellularLocation>
</comment>
<comment type="PTM">
    <text>The N-terminus is blocked.</text>
</comment>
<feature type="chain" id="PRO_0000073751" description="Plastin-1">
    <location>
        <begin position="1"/>
        <end position="630"/>
    </location>
</feature>
<feature type="domain" description="EF-hand 1" evidence="3">
    <location>
        <begin position="11"/>
        <end position="46"/>
    </location>
</feature>
<feature type="domain" description="EF-hand 2" evidence="3">
    <location>
        <begin position="51"/>
        <end position="86"/>
    </location>
</feature>
<feature type="domain" description="Calponin-homology (CH) 1" evidence="2">
    <location>
        <begin position="122"/>
        <end position="238"/>
    </location>
</feature>
<feature type="domain" description="Calponin-homology (CH) 2" evidence="2">
    <location>
        <begin position="266"/>
        <end position="377"/>
    </location>
</feature>
<feature type="domain" description="Calponin-homology (CH) 3" evidence="2">
    <location>
        <begin position="396"/>
        <end position="505"/>
    </location>
</feature>
<feature type="domain" description="Calponin-homology (CH) 4" evidence="2">
    <location>
        <begin position="517"/>
        <end position="626"/>
    </location>
</feature>
<feature type="region of interest" description="Fimbrin headpiece">
    <location>
        <begin position="1"/>
        <end position="114"/>
    </location>
</feature>
<feature type="region of interest" description="Actin-binding 1">
    <location>
        <begin position="108"/>
        <end position="375"/>
    </location>
</feature>
<feature type="region of interest" description="Fimbrin core">
    <location>
        <begin position="115"/>
        <end position="630"/>
    </location>
</feature>
<feature type="region of interest" description="Actin-binding 2">
    <location>
        <begin position="376"/>
        <end position="624"/>
    </location>
</feature>
<feature type="binding site" evidence="3">
    <location>
        <position position="24"/>
    </location>
    <ligand>
        <name>Ca(2+)</name>
        <dbReference type="ChEBI" id="CHEBI:29108"/>
        <label>1</label>
    </ligand>
</feature>
<feature type="binding site" evidence="3">
    <location>
        <position position="26"/>
    </location>
    <ligand>
        <name>Ca(2+)</name>
        <dbReference type="ChEBI" id="CHEBI:29108"/>
        <label>1</label>
    </ligand>
</feature>
<feature type="binding site" evidence="3">
    <location>
        <position position="28"/>
    </location>
    <ligand>
        <name>Ca(2+)</name>
        <dbReference type="ChEBI" id="CHEBI:29108"/>
        <label>1</label>
    </ligand>
</feature>
<feature type="binding site" evidence="3">
    <location>
        <position position="30"/>
    </location>
    <ligand>
        <name>Ca(2+)</name>
        <dbReference type="ChEBI" id="CHEBI:29108"/>
        <label>1</label>
    </ligand>
</feature>
<feature type="binding site" evidence="3">
    <location>
        <position position="35"/>
    </location>
    <ligand>
        <name>Ca(2+)</name>
        <dbReference type="ChEBI" id="CHEBI:29108"/>
        <label>1</label>
    </ligand>
</feature>
<feature type="binding site" evidence="3">
    <location>
        <position position="64"/>
    </location>
    <ligand>
        <name>Ca(2+)</name>
        <dbReference type="ChEBI" id="CHEBI:29108"/>
        <label>2</label>
    </ligand>
</feature>
<feature type="binding site" evidence="3">
    <location>
        <position position="66"/>
    </location>
    <ligand>
        <name>Ca(2+)</name>
        <dbReference type="ChEBI" id="CHEBI:29108"/>
        <label>2</label>
    </ligand>
</feature>
<feature type="binding site" evidence="3">
    <location>
        <position position="68"/>
    </location>
    <ligand>
        <name>Ca(2+)</name>
        <dbReference type="ChEBI" id="CHEBI:29108"/>
        <label>2</label>
    </ligand>
</feature>
<feature type="binding site" evidence="3">
    <location>
        <position position="70"/>
    </location>
    <ligand>
        <name>Ca(2+)</name>
        <dbReference type="ChEBI" id="CHEBI:29108"/>
        <label>2</label>
    </ligand>
</feature>
<feature type="binding site" evidence="3">
    <location>
        <position position="75"/>
    </location>
    <ligand>
        <name>Ca(2+)</name>
        <dbReference type="ChEBI" id="CHEBI:29108"/>
        <label>2</label>
    </ligand>
</feature>